<proteinExistence type="inferred from homology"/>
<keyword id="KW-0256">Endoplasmic reticulum</keyword>
<keyword id="KW-0325">Glycoprotein</keyword>
<keyword id="KW-0413">Isomerase</keyword>
<keyword id="KW-1185">Reference proteome</keyword>
<keyword id="KW-0697">Rotamase</keyword>
<keyword id="KW-0732">Signal</keyword>
<reference key="1">
    <citation type="journal article" date="2002" name="Nature">
        <title>The genome sequence of Schizosaccharomyces pombe.</title>
        <authorList>
            <person name="Wood V."/>
            <person name="Gwilliam R."/>
            <person name="Rajandream M.A."/>
            <person name="Lyne M.H."/>
            <person name="Lyne R."/>
            <person name="Stewart A."/>
            <person name="Sgouros J.G."/>
            <person name="Peat N."/>
            <person name="Hayles J."/>
            <person name="Baker S.G."/>
            <person name="Basham D."/>
            <person name="Bowman S."/>
            <person name="Brooks K."/>
            <person name="Brown D."/>
            <person name="Brown S."/>
            <person name="Chillingworth T."/>
            <person name="Churcher C.M."/>
            <person name="Collins M."/>
            <person name="Connor R."/>
            <person name="Cronin A."/>
            <person name="Davis P."/>
            <person name="Feltwell T."/>
            <person name="Fraser A."/>
            <person name="Gentles S."/>
            <person name="Goble A."/>
            <person name="Hamlin N."/>
            <person name="Harris D.E."/>
            <person name="Hidalgo J."/>
            <person name="Hodgson G."/>
            <person name="Holroyd S."/>
            <person name="Hornsby T."/>
            <person name="Howarth S."/>
            <person name="Huckle E.J."/>
            <person name="Hunt S."/>
            <person name="Jagels K."/>
            <person name="James K.D."/>
            <person name="Jones L."/>
            <person name="Jones M."/>
            <person name="Leather S."/>
            <person name="McDonald S."/>
            <person name="McLean J."/>
            <person name="Mooney P."/>
            <person name="Moule S."/>
            <person name="Mungall K.L."/>
            <person name="Murphy L.D."/>
            <person name="Niblett D."/>
            <person name="Odell C."/>
            <person name="Oliver K."/>
            <person name="O'Neil S."/>
            <person name="Pearson D."/>
            <person name="Quail M.A."/>
            <person name="Rabbinowitsch E."/>
            <person name="Rutherford K.M."/>
            <person name="Rutter S."/>
            <person name="Saunders D."/>
            <person name="Seeger K."/>
            <person name="Sharp S."/>
            <person name="Skelton J."/>
            <person name="Simmonds M.N."/>
            <person name="Squares R."/>
            <person name="Squares S."/>
            <person name="Stevens K."/>
            <person name="Taylor K."/>
            <person name="Taylor R.G."/>
            <person name="Tivey A."/>
            <person name="Walsh S.V."/>
            <person name="Warren T."/>
            <person name="Whitehead S."/>
            <person name="Woodward J.R."/>
            <person name="Volckaert G."/>
            <person name="Aert R."/>
            <person name="Robben J."/>
            <person name="Grymonprez B."/>
            <person name="Weltjens I."/>
            <person name="Vanstreels E."/>
            <person name="Rieger M."/>
            <person name="Schaefer M."/>
            <person name="Mueller-Auer S."/>
            <person name="Gabel C."/>
            <person name="Fuchs M."/>
            <person name="Duesterhoeft A."/>
            <person name="Fritzc C."/>
            <person name="Holzer E."/>
            <person name="Moestl D."/>
            <person name="Hilbert H."/>
            <person name="Borzym K."/>
            <person name="Langer I."/>
            <person name="Beck A."/>
            <person name="Lehrach H."/>
            <person name="Reinhardt R."/>
            <person name="Pohl T.M."/>
            <person name="Eger P."/>
            <person name="Zimmermann W."/>
            <person name="Wedler H."/>
            <person name="Wambutt R."/>
            <person name="Purnelle B."/>
            <person name="Goffeau A."/>
            <person name="Cadieu E."/>
            <person name="Dreano S."/>
            <person name="Gloux S."/>
            <person name="Lelaure V."/>
            <person name="Mottier S."/>
            <person name="Galibert F."/>
            <person name="Aves S.J."/>
            <person name="Xiang Z."/>
            <person name="Hunt C."/>
            <person name="Moore K."/>
            <person name="Hurst S.M."/>
            <person name="Lucas M."/>
            <person name="Rochet M."/>
            <person name="Gaillardin C."/>
            <person name="Tallada V.A."/>
            <person name="Garzon A."/>
            <person name="Thode G."/>
            <person name="Daga R.R."/>
            <person name="Cruzado L."/>
            <person name="Jimenez J."/>
            <person name="Sanchez M."/>
            <person name="del Rey F."/>
            <person name="Benito J."/>
            <person name="Dominguez A."/>
            <person name="Revuelta J.L."/>
            <person name="Moreno S."/>
            <person name="Armstrong J."/>
            <person name="Forsburg S.L."/>
            <person name="Cerutti L."/>
            <person name="Lowe T."/>
            <person name="McCombie W.R."/>
            <person name="Paulsen I."/>
            <person name="Potashkin J."/>
            <person name="Shpakovski G.V."/>
            <person name="Ussery D."/>
            <person name="Barrell B.G."/>
            <person name="Nurse P."/>
        </authorList>
    </citation>
    <scope>NUCLEOTIDE SEQUENCE [LARGE SCALE GENOMIC DNA]</scope>
    <source>
        <strain>972 / ATCC 24843</strain>
    </source>
</reference>
<reference key="2">
    <citation type="journal article" date="2005" name="Yeast">
        <title>The cyclophilin repertoire of the fission yeast Schizosaccharomyces pombe.</title>
        <authorList>
            <person name="Pemberton T.J."/>
            <person name="Kay J.E."/>
        </authorList>
    </citation>
    <scope>SUBCELLULAR LOCATION</scope>
</reference>
<protein>
    <recommendedName>
        <fullName>Peptidyl-prolyl cis-trans isomerase B</fullName>
        <shortName>PPIase B</shortName>
        <ecNumber>5.2.1.8</ecNumber>
    </recommendedName>
    <alternativeName>
        <fullName>Cyclophilin 4</fullName>
    </alternativeName>
    <alternativeName>
        <fullName>Rotamase B</fullName>
    </alternativeName>
</protein>
<organism>
    <name type="scientific">Schizosaccharomyces pombe (strain 972 / ATCC 24843)</name>
    <name type="common">Fission yeast</name>
    <dbReference type="NCBI Taxonomy" id="284812"/>
    <lineage>
        <taxon>Eukaryota</taxon>
        <taxon>Fungi</taxon>
        <taxon>Dikarya</taxon>
        <taxon>Ascomycota</taxon>
        <taxon>Taphrinomycotina</taxon>
        <taxon>Schizosaccharomycetes</taxon>
        <taxon>Schizosaccharomycetales</taxon>
        <taxon>Schizosaccharomycetaceae</taxon>
        <taxon>Schizosaccharomyces</taxon>
    </lineage>
</organism>
<sequence length="201" mass="22156">MKLFYFSLLFTLFFGLISANRGPKVTDTVYFDLQQGDEFLGRVTIGLFGKTVPKTAENFRALATGEKGFGYEGSIFHRVIPNFMIQGGDITKGDGTGGKSIYGSRFPDENFKLSHQRPGLLSMANAGPDSNGSQFFITTVKTPWLDGHHVVFGEVLSGYDIVKKISKAETDNRDKPLEDVKIIKSGQLSQENVEDDGTDEL</sequence>
<dbReference type="EC" id="5.2.1.8"/>
<dbReference type="EMBL" id="CU329671">
    <property type="protein sequence ID" value="CAA21810.1"/>
    <property type="molecule type" value="Genomic_DNA"/>
</dbReference>
<dbReference type="PIR" id="T40819">
    <property type="entry name" value="T40819"/>
</dbReference>
<dbReference type="RefSeq" id="NP_596532.1">
    <property type="nucleotide sequence ID" value="NM_001022453.2"/>
</dbReference>
<dbReference type="SMR" id="O94273"/>
<dbReference type="BioGRID" id="277904">
    <property type="interactions" value="29"/>
</dbReference>
<dbReference type="FunCoup" id="O94273">
    <property type="interactions" value="192"/>
</dbReference>
<dbReference type="STRING" id="284812.O94273"/>
<dbReference type="GlyCosmos" id="O94273">
    <property type="glycosylation" value="1 site, No reported glycans"/>
</dbReference>
<dbReference type="iPTMnet" id="O94273"/>
<dbReference type="PaxDb" id="4896-SPBP8B7.25.1"/>
<dbReference type="EnsemblFungi" id="SPBP8B7.25.1">
    <property type="protein sequence ID" value="SPBP8B7.25.1:pep"/>
    <property type="gene ID" value="SPBP8B7.25"/>
</dbReference>
<dbReference type="GeneID" id="2541395"/>
<dbReference type="KEGG" id="spo:2541395"/>
<dbReference type="PomBase" id="SPBP8B7.25">
    <property type="gene designation" value="cyp4"/>
</dbReference>
<dbReference type="VEuPathDB" id="FungiDB:SPBP8B7.25"/>
<dbReference type="eggNOG" id="KOG0880">
    <property type="taxonomic scope" value="Eukaryota"/>
</dbReference>
<dbReference type="HOGENOM" id="CLU_012062_4_2_1"/>
<dbReference type="InParanoid" id="O94273"/>
<dbReference type="OMA" id="ENHEITH"/>
<dbReference type="PhylomeDB" id="O94273"/>
<dbReference type="PRO" id="PR:O94273"/>
<dbReference type="Proteomes" id="UP000002485">
    <property type="component" value="Chromosome II"/>
</dbReference>
<dbReference type="GO" id="GO:0005737">
    <property type="term" value="C:cytoplasm"/>
    <property type="evidence" value="ECO:0000318"/>
    <property type="project" value="GO_Central"/>
</dbReference>
<dbReference type="GO" id="GO:0005783">
    <property type="term" value="C:endoplasmic reticulum"/>
    <property type="evidence" value="ECO:0007005"/>
    <property type="project" value="PomBase"/>
</dbReference>
<dbReference type="GO" id="GO:0005788">
    <property type="term" value="C:endoplasmic reticulum lumen"/>
    <property type="evidence" value="ECO:0000266"/>
    <property type="project" value="PomBase"/>
</dbReference>
<dbReference type="GO" id="GO:0005794">
    <property type="term" value="C:Golgi apparatus"/>
    <property type="evidence" value="ECO:0007005"/>
    <property type="project" value="PomBase"/>
</dbReference>
<dbReference type="GO" id="GO:0016018">
    <property type="term" value="F:cyclosporin A binding"/>
    <property type="evidence" value="ECO:0000318"/>
    <property type="project" value="GO_Central"/>
</dbReference>
<dbReference type="GO" id="GO:0003755">
    <property type="term" value="F:peptidyl-prolyl cis-trans isomerase activity"/>
    <property type="evidence" value="ECO:0000314"/>
    <property type="project" value="PomBase"/>
</dbReference>
<dbReference type="GO" id="GO:0006457">
    <property type="term" value="P:protein folding"/>
    <property type="evidence" value="ECO:0000318"/>
    <property type="project" value="GO_Central"/>
</dbReference>
<dbReference type="GO" id="GO:0034975">
    <property type="term" value="P:protein folding in endoplasmic reticulum"/>
    <property type="evidence" value="ECO:0000305"/>
    <property type="project" value="PomBase"/>
</dbReference>
<dbReference type="FunFam" id="2.40.100.10:FF:000001">
    <property type="entry name" value="Peptidyl-prolyl cis-trans isomerase"/>
    <property type="match status" value="1"/>
</dbReference>
<dbReference type="Gene3D" id="2.40.100.10">
    <property type="entry name" value="Cyclophilin-like"/>
    <property type="match status" value="1"/>
</dbReference>
<dbReference type="InterPro" id="IPR029000">
    <property type="entry name" value="Cyclophilin-like_dom_sf"/>
</dbReference>
<dbReference type="InterPro" id="IPR024936">
    <property type="entry name" value="Cyclophilin-type_PPIase"/>
</dbReference>
<dbReference type="InterPro" id="IPR020892">
    <property type="entry name" value="Cyclophilin-type_PPIase_CS"/>
</dbReference>
<dbReference type="InterPro" id="IPR002130">
    <property type="entry name" value="Cyclophilin-type_PPIase_dom"/>
</dbReference>
<dbReference type="PANTHER" id="PTHR11071">
    <property type="entry name" value="PEPTIDYL-PROLYL CIS-TRANS ISOMERASE"/>
    <property type="match status" value="1"/>
</dbReference>
<dbReference type="PANTHER" id="PTHR11071:SF561">
    <property type="entry name" value="PEPTIDYL-PROLYL CIS-TRANS ISOMERASE D-RELATED"/>
    <property type="match status" value="1"/>
</dbReference>
<dbReference type="Pfam" id="PF00160">
    <property type="entry name" value="Pro_isomerase"/>
    <property type="match status" value="1"/>
</dbReference>
<dbReference type="PIRSF" id="PIRSF001467">
    <property type="entry name" value="Peptidylpro_ismrse"/>
    <property type="match status" value="1"/>
</dbReference>
<dbReference type="PRINTS" id="PR00153">
    <property type="entry name" value="CSAPPISMRASE"/>
</dbReference>
<dbReference type="SUPFAM" id="SSF50891">
    <property type="entry name" value="Cyclophilin-like"/>
    <property type="match status" value="1"/>
</dbReference>
<dbReference type="PROSITE" id="PS00170">
    <property type="entry name" value="CSA_PPIASE_1"/>
    <property type="match status" value="1"/>
</dbReference>
<dbReference type="PROSITE" id="PS50072">
    <property type="entry name" value="CSA_PPIASE_2"/>
    <property type="match status" value="1"/>
</dbReference>
<accession>O94273</accession>
<comment type="function">
    <text evidence="1">PPIases accelerate the folding of proteins. It catalyzes the cis-trans isomerization of proline imidic peptide bonds in oligopeptides (By similarity).</text>
</comment>
<comment type="catalytic activity">
    <reaction>
        <text>[protein]-peptidylproline (omega=180) = [protein]-peptidylproline (omega=0)</text>
        <dbReference type="Rhea" id="RHEA:16237"/>
        <dbReference type="Rhea" id="RHEA-COMP:10747"/>
        <dbReference type="Rhea" id="RHEA-COMP:10748"/>
        <dbReference type="ChEBI" id="CHEBI:83833"/>
        <dbReference type="ChEBI" id="CHEBI:83834"/>
        <dbReference type="EC" id="5.2.1.8"/>
    </reaction>
</comment>
<comment type="activity regulation">
    <text evidence="1">Inhibited by cyclosporin A (CsA).</text>
</comment>
<comment type="subcellular location">
    <subcellularLocation>
        <location evidence="5">Endoplasmic reticulum lumen</location>
    </subcellularLocation>
</comment>
<comment type="similarity">
    <text evidence="6">Belongs to the cyclophilin-type PPIase family. PPIase B subfamily.</text>
</comment>
<gene>
    <name type="primary">cyp4</name>
    <name type="ORF">SPBP8B7.25</name>
</gene>
<evidence type="ECO:0000250" key="1"/>
<evidence type="ECO:0000255" key="2"/>
<evidence type="ECO:0000255" key="3">
    <source>
        <dbReference type="PROSITE-ProRule" id="PRU00156"/>
    </source>
</evidence>
<evidence type="ECO:0000256" key="4">
    <source>
        <dbReference type="SAM" id="MobiDB-lite"/>
    </source>
</evidence>
<evidence type="ECO:0000269" key="5">
    <source>
    </source>
</evidence>
<evidence type="ECO:0000305" key="6"/>
<name>PPIB_SCHPO</name>
<feature type="signal peptide" evidence="2">
    <location>
        <begin position="1"/>
        <end position="19"/>
    </location>
</feature>
<feature type="chain" id="PRO_0000233050" description="Peptidyl-prolyl cis-trans isomerase B">
    <location>
        <begin position="20"/>
        <end position="201"/>
    </location>
</feature>
<feature type="domain" description="PPIase cyclophilin-type" evidence="3">
    <location>
        <begin position="30"/>
        <end position="187"/>
    </location>
</feature>
<feature type="region of interest" description="Disordered" evidence="4">
    <location>
        <begin position="174"/>
        <end position="201"/>
    </location>
</feature>
<feature type="short sequence motif" description="Prevents secretion from ER">
    <location>
        <begin position="198"/>
        <end position="201"/>
    </location>
</feature>
<feature type="compositionally biased region" description="Acidic residues" evidence="4">
    <location>
        <begin position="192"/>
        <end position="201"/>
    </location>
</feature>
<feature type="glycosylation site" description="N-linked (GlcNAc...) asparagine" evidence="2">
    <location>
        <position position="131"/>
    </location>
</feature>